<comment type="similarity">
    <text evidence="1">Belongs to the UPF0435 family.</text>
</comment>
<comment type="sequence caution" evidence="2">
    <conflict type="erroneous initiation">
        <sequence resource="EMBL-CDS" id="ABD20696"/>
    </conflict>
</comment>
<gene>
    <name type="ordered locus">SAUSA300_1861</name>
</gene>
<feature type="chain" id="PRO_0000291423" description="UPF0435 protein SAUSA300_1861">
    <location>
        <begin position="1"/>
        <end position="68"/>
    </location>
</feature>
<proteinExistence type="inferred from homology"/>
<dbReference type="EMBL" id="CP000255">
    <property type="protein sequence ID" value="ABD20696.1"/>
    <property type="status" value="ALT_INIT"/>
    <property type="molecule type" value="Genomic_DNA"/>
</dbReference>
<dbReference type="SMR" id="Q2FFL5"/>
<dbReference type="KEGG" id="saa:SAUSA300_1861"/>
<dbReference type="HOGENOM" id="CLU_199533_0_0_9"/>
<dbReference type="Proteomes" id="UP000001939">
    <property type="component" value="Chromosome"/>
</dbReference>
<dbReference type="HAMAP" id="MF_00829">
    <property type="entry name" value="UPF0435"/>
    <property type="match status" value="1"/>
</dbReference>
<dbReference type="InterPro" id="IPR009507">
    <property type="entry name" value="UPF0435"/>
</dbReference>
<dbReference type="Pfam" id="PF06569">
    <property type="entry name" value="DUF1128"/>
    <property type="match status" value="1"/>
</dbReference>
<name>Y1861_STAA3</name>
<protein>
    <recommendedName>
        <fullName evidence="1">UPF0435 protein SAUSA300_1861</fullName>
    </recommendedName>
</protein>
<reference key="1">
    <citation type="journal article" date="2006" name="Lancet">
        <title>Complete genome sequence of USA300, an epidemic clone of community-acquired meticillin-resistant Staphylococcus aureus.</title>
        <authorList>
            <person name="Diep B.A."/>
            <person name="Gill S.R."/>
            <person name="Chang R.F."/>
            <person name="Phan T.H."/>
            <person name="Chen J.H."/>
            <person name="Davidson M.G."/>
            <person name="Lin F."/>
            <person name="Lin J."/>
            <person name="Carleton H.A."/>
            <person name="Mongodin E.F."/>
            <person name="Sensabaugh G.F."/>
            <person name="Perdreau-Remington F."/>
        </authorList>
    </citation>
    <scope>NUCLEOTIDE SEQUENCE [LARGE SCALE GENOMIC DNA]</scope>
    <source>
        <strain>USA300</strain>
    </source>
</reference>
<organism>
    <name type="scientific">Staphylococcus aureus (strain USA300)</name>
    <dbReference type="NCBI Taxonomy" id="367830"/>
    <lineage>
        <taxon>Bacteria</taxon>
        <taxon>Bacillati</taxon>
        <taxon>Bacillota</taxon>
        <taxon>Bacilli</taxon>
        <taxon>Bacillales</taxon>
        <taxon>Staphylococcaceae</taxon>
        <taxon>Staphylococcus</taxon>
    </lineage>
</organism>
<sequence length="68" mass="7789">MAMTNEEKVLAIREKLNIVNQGLLDPEKYKNANEEELTDIYDFVQSRERLSPSEVTAIADALGQLRHE</sequence>
<evidence type="ECO:0000255" key="1">
    <source>
        <dbReference type="HAMAP-Rule" id="MF_00829"/>
    </source>
</evidence>
<evidence type="ECO:0000305" key="2"/>
<accession>Q2FFL5</accession>